<feature type="chain" id="PRO_0000130452" description="Large ribosomal subunit protein uL29">
    <location>
        <begin position="1"/>
        <end position="63"/>
    </location>
</feature>
<organism>
    <name type="scientific">Shigella flexneri</name>
    <dbReference type="NCBI Taxonomy" id="623"/>
    <lineage>
        <taxon>Bacteria</taxon>
        <taxon>Pseudomonadati</taxon>
        <taxon>Pseudomonadota</taxon>
        <taxon>Gammaproteobacteria</taxon>
        <taxon>Enterobacterales</taxon>
        <taxon>Enterobacteriaceae</taxon>
        <taxon>Shigella</taxon>
    </lineage>
</organism>
<gene>
    <name evidence="1" type="primary">rpmC</name>
    <name type="ordered locus">SF3344</name>
    <name type="ordered locus">S4418</name>
</gene>
<protein>
    <recommendedName>
        <fullName evidence="1">Large ribosomal subunit protein uL29</fullName>
    </recommendedName>
    <alternativeName>
        <fullName evidence="2">50S ribosomal protein L29</fullName>
    </alternativeName>
</protein>
<dbReference type="EMBL" id="AE005674">
    <property type="protein sequence ID" value="AAN44807.1"/>
    <property type="molecule type" value="Genomic_DNA"/>
</dbReference>
<dbReference type="EMBL" id="AE014073">
    <property type="protein sequence ID" value="AAP19369.1"/>
    <property type="molecule type" value="Genomic_DNA"/>
</dbReference>
<dbReference type="RefSeq" id="NP_709100.1">
    <property type="nucleotide sequence ID" value="NC_004337.2"/>
</dbReference>
<dbReference type="RefSeq" id="WP_000644739.1">
    <property type="nucleotide sequence ID" value="NZ_WPGW01000088.1"/>
</dbReference>
<dbReference type="SMR" id="Q83PY7"/>
<dbReference type="STRING" id="198214.SF3344"/>
<dbReference type="PaxDb" id="198214-SF3344"/>
<dbReference type="GeneID" id="1026974"/>
<dbReference type="KEGG" id="sfl:SF3344"/>
<dbReference type="KEGG" id="sfx:S4418"/>
<dbReference type="PATRIC" id="fig|198214.7.peg.3953"/>
<dbReference type="HOGENOM" id="CLU_158491_1_2_6"/>
<dbReference type="Proteomes" id="UP000001006">
    <property type="component" value="Chromosome"/>
</dbReference>
<dbReference type="Proteomes" id="UP000002673">
    <property type="component" value="Chromosome"/>
</dbReference>
<dbReference type="GO" id="GO:0022625">
    <property type="term" value="C:cytosolic large ribosomal subunit"/>
    <property type="evidence" value="ECO:0007669"/>
    <property type="project" value="TreeGrafter"/>
</dbReference>
<dbReference type="GO" id="GO:0003735">
    <property type="term" value="F:structural constituent of ribosome"/>
    <property type="evidence" value="ECO:0007669"/>
    <property type="project" value="InterPro"/>
</dbReference>
<dbReference type="GO" id="GO:0006412">
    <property type="term" value="P:translation"/>
    <property type="evidence" value="ECO:0007669"/>
    <property type="project" value="UniProtKB-UniRule"/>
</dbReference>
<dbReference type="CDD" id="cd00427">
    <property type="entry name" value="Ribosomal_L29_HIP"/>
    <property type="match status" value="1"/>
</dbReference>
<dbReference type="FunFam" id="1.10.287.310:FF:000001">
    <property type="entry name" value="50S ribosomal protein L29"/>
    <property type="match status" value="1"/>
</dbReference>
<dbReference type="Gene3D" id="6.10.140.1970">
    <property type="match status" value="1"/>
</dbReference>
<dbReference type="HAMAP" id="MF_00374">
    <property type="entry name" value="Ribosomal_uL29"/>
    <property type="match status" value="1"/>
</dbReference>
<dbReference type="InterPro" id="IPR050063">
    <property type="entry name" value="Ribosomal_protein_uL29"/>
</dbReference>
<dbReference type="InterPro" id="IPR001854">
    <property type="entry name" value="Ribosomal_uL29"/>
</dbReference>
<dbReference type="InterPro" id="IPR018254">
    <property type="entry name" value="Ribosomal_uL29_CS"/>
</dbReference>
<dbReference type="InterPro" id="IPR036049">
    <property type="entry name" value="Ribosomal_uL29_sf"/>
</dbReference>
<dbReference type="NCBIfam" id="TIGR00012">
    <property type="entry name" value="L29"/>
    <property type="match status" value="1"/>
</dbReference>
<dbReference type="PANTHER" id="PTHR10916">
    <property type="entry name" value="60S RIBOSOMAL PROTEIN L35/50S RIBOSOMAL PROTEIN L29"/>
    <property type="match status" value="1"/>
</dbReference>
<dbReference type="PANTHER" id="PTHR10916:SF0">
    <property type="entry name" value="LARGE RIBOSOMAL SUBUNIT PROTEIN UL29C"/>
    <property type="match status" value="1"/>
</dbReference>
<dbReference type="Pfam" id="PF00831">
    <property type="entry name" value="Ribosomal_L29"/>
    <property type="match status" value="1"/>
</dbReference>
<dbReference type="SUPFAM" id="SSF46561">
    <property type="entry name" value="Ribosomal protein L29 (L29p)"/>
    <property type="match status" value="1"/>
</dbReference>
<dbReference type="PROSITE" id="PS00579">
    <property type="entry name" value="RIBOSOMAL_L29"/>
    <property type="match status" value="1"/>
</dbReference>
<name>RL29_SHIFL</name>
<reference key="1">
    <citation type="journal article" date="2002" name="Nucleic Acids Res.">
        <title>Genome sequence of Shigella flexneri 2a: insights into pathogenicity through comparison with genomes of Escherichia coli K12 and O157.</title>
        <authorList>
            <person name="Jin Q."/>
            <person name="Yuan Z."/>
            <person name="Xu J."/>
            <person name="Wang Y."/>
            <person name="Shen Y."/>
            <person name="Lu W."/>
            <person name="Wang J."/>
            <person name="Liu H."/>
            <person name="Yang J."/>
            <person name="Yang F."/>
            <person name="Zhang X."/>
            <person name="Zhang J."/>
            <person name="Yang G."/>
            <person name="Wu H."/>
            <person name="Qu D."/>
            <person name="Dong J."/>
            <person name="Sun L."/>
            <person name="Xue Y."/>
            <person name="Zhao A."/>
            <person name="Gao Y."/>
            <person name="Zhu J."/>
            <person name="Kan B."/>
            <person name="Ding K."/>
            <person name="Chen S."/>
            <person name="Cheng H."/>
            <person name="Yao Z."/>
            <person name="He B."/>
            <person name="Chen R."/>
            <person name="Ma D."/>
            <person name="Qiang B."/>
            <person name="Wen Y."/>
            <person name="Hou Y."/>
            <person name="Yu J."/>
        </authorList>
    </citation>
    <scope>NUCLEOTIDE SEQUENCE [LARGE SCALE GENOMIC DNA]</scope>
    <source>
        <strain>301 / Serotype 2a</strain>
    </source>
</reference>
<reference key="2">
    <citation type="journal article" date="2003" name="Infect. Immun.">
        <title>Complete genome sequence and comparative genomics of Shigella flexneri serotype 2a strain 2457T.</title>
        <authorList>
            <person name="Wei J."/>
            <person name="Goldberg M.B."/>
            <person name="Burland V."/>
            <person name="Venkatesan M.M."/>
            <person name="Deng W."/>
            <person name="Fournier G."/>
            <person name="Mayhew G.F."/>
            <person name="Plunkett G. III"/>
            <person name="Rose D.J."/>
            <person name="Darling A."/>
            <person name="Mau B."/>
            <person name="Perna N.T."/>
            <person name="Payne S.M."/>
            <person name="Runyen-Janecky L.J."/>
            <person name="Zhou S."/>
            <person name="Schwartz D.C."/>
            <person name="Blattner F.R."/>
        </authorList>
    </citation>
    <scope>NUCLEOTIDE SEQUENCE [LARGE SCALE GENOMIC DNA]</scope>
    <source>
        <strain>ATCC 700930 / 2457T / Serotype 2a</strain>
    </source>
</reference>
<proteinExistence type="inferred from homology"/>
<sequence length="63" mass="7287">MKAKELREKSIEELNTELLNLLREQFNLRMQAASGQLQQSHLLKQVRRDVARVKTLLNEKAGA</sequence>
<comment type="similarity">
    <text evidence="1">Belongs to the universal ribosomal protein uL29 family.</text>
</comment>
<evidence type="ECO:0000255" key="1">
    <source>
        <dbReference type="HAMAP-Rule" id="MF_00374"/>
    </source>
</evidence>
<evidence type="ECO:0000305" key="2"/>
<accession>Q83PY7</accession>
<accession>Q7BYQ3</accession>
<keyword id="KW-1185">Reference proteome</keyword>
<keyword id="KW-0687">Ribonucleoprotein</keyword>
<keyword id="KW-0689">Ribosomal protein</keyword>